<organism>
    <name type="scientific">Schizosaccharomyces pombe (strain 972 / ATCC 24843)</name>
    <name type="common">Fission yeast</name>
    <dbReference type="NCBI Taxonomy" id="284812"/>
    <lineage>
        <taxon>Eukaryota</taxon>
        <taxon>Fungi</taxon>
        <taxon>Dikarya</taxon>
        <taxon>Ascomycota</taxon>
        <taxon>Taphrinomycotina</taxon>
        <taxon>Schizosaccharomycetes</taxon>
        <taxon>Schizosaccharomycetales</taxon>
        <taxon>Schizosaccharomycetaceae</taxon>
        <taxon>Schizosaccharomyces</taxon>
    </lineage>
</organism>
<dbReference type="EMBL" id="D89143">
    <property type="protein sequence ID" value="BAA13805.1"/>
    <property type="molecule type" value="mRNA"/>
</dbReference>
<dbReference type="EMBL" id="CU329671">
    <property type="protein sequence ID" value="CAA21276.1"/>
    <property type="molecule type" value="Genomic_DNA"/>
</dbReference>
<dbReference type="PIR" id="T40259">
    <property type="entry name" value="T40259"/>
</dbReference>
<dbReference type="PIR" id="T42419">
    <property type="entry name" value="T42419"/>
</dbReference>
<dbReference type="RefSeq" id="NP_595407.1">
    <property type="nucleotide sequence ID" value="NM_001021314.2"/>
</dbReference>
<dbReference type="PDB" id="3JB9">
    <property type="method" value="EM"/>
    <property type="resolution" value="3.60 A"/>
    <property type="chains" value="h=1-265"/>
</dbReference>
<dbReference type="PDB" id="9ESH">
    <property type="method" value="EM"/>
    <property type="resolution" value="3.20 A"/>
    <property type="chains" value="Q=1-265"/>
</dbReference>
<dbReference type="PDB" id="9ESI">
    <property type="method" value="EM"/>
    <property type="resolution" value="3.10 A"/>
    <property type="chains" value="Q=1-265"/>
</dbReference>
<dbReference type="PDBsum" id="3JB9"/>
<dbReference type="PDBsum" id="9ESH"/>
<dbReference type="PDBsum" id="9ESI"/>
<dbReference type="EMDB" id="EMD-19941"/>
<dbReference type="EMDB" id="EMD-19942"/>
<dbReference type="SMR" id="P78794"/>
<dbReference type="BioGRID" id="277499">
    <property type="interactions" value="70"/>
</dbReference>
<dbReference type="FunCoup" id="P78794">
    <property type="interactions" value="484"/>
</dbReference>
<dbReference type="IntAct" id="P78794">
    <property type="interactions" value="5"/>
</dbReference>
<dbReference type="STRING" id="284812.P78794"/>
<dbReference type="iPTMnet" id="P78794"/>
<dbReference type="PaxDb" id="4896-SPBC337.06c.1"/>
<dbReference type="EnsemblFungi" id="SPBC337.06c.1">
    <property type="protein sequence ID" value="SPBC337.06c.1:pep"/>
    <property type="gene ID" value="SPBC337.06c"/>
</dbReference>
<dbReference type="GeneID" id="2540983"/>
<dbReference type="KEGG" id="spo:2540983"/>
<dbReference type="PomBase" id="SPBC337.06c">
    <property type="gene designation" value="cwf15"/>
</dbReference>
<dbReference type="VEuPathDB" id="FungiDB:SPBC337.06c"/>
<dbReference type="eggNOG" id="KOG3228">
    <property type="taxonomic scope" value="Eukaryota"/>
</dbReference>
<dbReference type="HOGENOM" id="CLU_068312_0_1_1"/>
<dbReference type="InParanoid" id="P78794"/>
<dbReference type="OMA" id="KYREHGQ"/>
<dbReference type="PhylomeDB" id="P78794"/>
<dbReference type="Reactome" id="R-SPO-72163">
    <property type="pathway name" value="mRNA Splicing - Major Pathway"/>
</dbReference>
<dbReference type="EvolutionaryTrace" id="P78794"/>
<dbReference type="PRO" id="PR:P78794"/>
<dbReference type="Proteomes" id="UP000002485">
    <property type="component" value="Chromosome II"/>
</dbReference>
<dbReference type="GO" id="GO:0071013">
    <property type="term" value="C:catalytic step 2 spliceosome"/>
    <property type="evidence" value="ECO:0000318"/>
    <property type="project" value="GO_Central"/>
</dbReference>
<dbReference type="GO" id="GO:0005634">
    <property type="term" value="C:nucleus"/>
    <property type="evidence" value="ECO:0007005"/>
    <property type="project" value="PomBase"/>
</dbReference>
<dbReference type="GO" id="GO:0071014">
    <property type="term" value="C:post-mRNA release spliceosomal complex"/>
    <property type="evidence" value="ECO:0000314"/>
    <property type="project" value="PomBase"/>
</dbReference>
<dbReference type="GO" id="GO:0000974">
    <property type="term" value="C:Prp19 complex"/>
    <property type="evidence" value="ECO:0000314"/>
    <property type="project" value="PomBase"/>
</dbReference>
<dbReference type="GO" id="GO:0005681">
    <property type="term" value="C:spliceosomal complex"/>
    <property type="evidence" value="ECO:0000314"/>
    <property type="project" value="PomBase"/>
</dbReference>
<dbReference type="GO" id="GO:0003723">
    <property type="term" value="F:RNA binding"/>
    <property type="evidence" value="ECO:0000314"/>
    <property type="project" value="UniProtKB"/>
</dbReference>
<dbReference type="GO" id="GO:0045292">
    <property type="term" value="P:mRNA cis splicing, via spliceosome"/>
    <property type="evidence" value="ECO:0000269"/>
    <property type="project" value="PomBase"/>
</dbReference>
<dbReference type="GO" id="GO:0000398">
    <property type="term" value="P:mRNA splicing, via spliceosome"/>
    <property type="evidence" value="ECO:0000314"/>
    <property type="project" value="UniProtKB"/>
</dbReference>
<dbReference type="DisProt" id="DP02356"/>
<dbReference type="InterPro" id="IPR006973">
    <property type="entry name" value="Cwf_Cwc_15"/>
</dbReference>
<dbReference type="PANTHER" id="PTHR12718">
    <property type="entry name" value="CELL CYCLE CONTROL PROTEIN CWF15"/>
    <property type="match status" value="1"/>
</dbReference>
<dbReference type="PANTHER" id="PTHR12718:SF2">
    <property type="entry name" value="SPLICEOSOME-ASSOCIATED PROTEIN CWC15 HOMOLOG"/>
    <property type="match status" value="1"/>
</dbReference>
<dbReference type="Pfam" id="PF04889">
    <property type="entry name" value="Cwf_Cwc_15"/>
    <property type="match status" value="1"/>
</dbReference>
<sequence length="265" mass="30432">MTTAHRPQFDPARGHSEMAPTRITSSRALPAHLKLKYRQESQGTEEEVRKQDLREALLRAEAAHFATQEHGASSEEVSQNSKLIEGFTSPSTDDKPNNDVEVDYQELLRQTLEADEDASDSDDSVDSSNKNSEVSIKRRKTESNSQESVDSSNSESSDEESDSEDETQQLLRELENIKQERKREQMLQEEKNRALEQEKREREIAFGNELLNKASSGSFQVKRRWDEDVVFRNTHKGVDDTPRPGFVNDMLRSEFHKKFLARFVD</sequence>
<comment type="function">
    <text>Involved in pre-mRNA splicing.</text>
</comment>
<comment type="subunit">
    <text evidence="3">Belongs to the 40S cdc5-associated complex (or cwf complex), a spliceosome sub-complex reminiscent of a late-stage spliceosome composed of the U2, U5 and U6 snRNAs and at least brr2, cdc5, cwf2/prp3, cwf3/syf1, cwf4/syf3, cwf5/ecm2, spp42/cwf6, cwf7/spf27, cwf8, cwf9, cwf10, cwf11, cwf12, prp45/cwf13, cwf14, cwf15, cwf16, cwf17, cwf18, cwf19, cwf20, cwf21, cwf22, cwf23, cwf24, cwf25, cwf26, cyp7/cwf27, cwf28, cwf29/ist3, lea1, msl1, prp5/cwf1, prp10, prp12/sap130, prp17, prp22, sap61, sap62, sap114, sap145, slu7, smb1, smd1, smd3, smf1, smg1 and syf2.</text>
</comment>
<comment type="subcellular location">
    <subcellularLocation>
        <location evidence="4">Nucleus</location>
    </subcellularLocation>
</comment>
<comment type="similarity">
    <text evidence="4">Belongs to the CWC15 family.</text>
</comment>
<name>CWC15_SCHPO</name>
<protein>
    <recommendedName>
        <fullName>Pre-mRNA-splicing factor cwf15</fullName>
    </recommendedName>
    <alternativeName>
        <fullName>Complexed with cdc5 protein 15</fullName>
    </alternativeName>
</protein>
<accession>P78794</accession>
<accession>O74817</accession>
<gene>
    <name type="primary">cwf15</name>
    <name type="ORF">SPBC337.06c</name>
</gene>
<reference key="1">
    <citation type="journal article" date="1997" name="DNA Res.">
        <title>Identification of open reading frames in Schizosaccharomyces pombe cDNAs.</title>
        <authorList>
            <person name="Yoshioka S."/>
            <person name="Kato K."/>
            <person name="Nakai K."/>
            <person name="Okayama H."/>
            <person name="Nojima H."/>
        </authorList>
    </citation>
    <scope>NUCLEOTIDE SEQUENCE [LARGE SCALE MRNA]</scope>
    <source>
        <strain>PR745</strain>
    </source>
</reference>
<reference key="2">
    <citation type="journal article" date="2002" name="Nature">
        <title>The genome sequence of Schizosaccharomyces pombe.</title>
        <authorList>
            <person name="Wood V."/>
            <person name="Gwilliam R."/>
            <person name="Rajandream M.A."/>
            <person name="Lyne M.H."/>
            <person name="Lyne R."/>
            <person name="Stewart A."/>
            <person name="Sgouros J.G."/>
            <person name="Peat N."/>
            <person name="Hayles J."/>
            <person name="Baker S.G."/>
            <person name="Basham D."/>
            <person name="Bowman S."/>
            <person name="Brooks K."/>
            <person name="Brown D."/>
            <person name="Brown S."/>
            <person name="Chillingworth T."/>
            <person name="Churcher C.M."/>
            <person name="Collins M."/>
            <person name="Connor R."/>
            <person name="Cronin A."/>
            <person name="Davis P."/>
            <person name="Feltwell T."/>
            <person name="Fraser A."/>
            <person name="Gentles S."/>
            <person name="Goble A."/>
            <person name="Hamlin N."/>
            <person name="Harris D.E."/>
            <person name="Hidalgo J."/>
            <person name="Hodgson G."/>
            <person name="Holroyd S."/>
            <person name="Hornsby T."/>
            <person name="Howarth S."/>
            <person name="Huckle E.J."/>
            <person name="Hunt S."/>
            <person name="Jagels K."/>
            <person name="James K.D."/>
            <person name="Jones L."/>
            <person name="Jones M."/>
            <person name="Leather S."/>
            <person name="McDonald S."/>
            <person name="McLean J."/>
            <person name="Mooney P."/>
            <person name="Moule S."/>
            <person name="Mungall K.L."/>
            <person name="Murphy L.D."/>
            <person name="Niblett D."/>
            <person name="Odell C."/>
            <person name="Oliver K."/>
            <person name="O'Neil S."/>
            <person name="Pearson D."/>
            <person name="Quail M.A."/>
            <person name="Rabbinowitsch E."/>
            <person name="Rutherford K.M."/>
            <person name="Rutter S."/>
            <person name="Saunders D."/>
            <person name="Seeger K."/>
            <person name="Sharp S."/>
            <person name="Skelton J."/>
            <person name="Simmonds M.N."/>
            <person name="Squares R."/>
            <person name="Squares S."/>
            <person name="Stevens K."/>
            <person name="Taylor K."/>
            <person name="Taylor R.G."/>
            <person name="Tivey A."/>
            <person name="Walsh S.V."/>
            <person name="Warren T."/>
            <person name="Whitehead S."/>
            <person name="Woodward J.R."/>
            <person name="Volckaert G."/>
            <person name="Aert R."/>
            <person name="Robben J."/>
            <person name="Grymonprez B."/>
            <person name="Weltjens I."/>
            <person name="Vanstreels E."/>
            <person name="Rieger M."/>
            <person name="Schaefer M."/>
            <person name="Mueller-Auer S."/>
            <person name="Gabel C."/>
            <person name="Fuchs M."/>
            <person name="Duesterhoeft A."/>
            <person name="Fritzc C."/>
            <person name="Holzer E."/>
            <person name="Moestl D."/>
            <person name="Hilbert H."/>
            <person name="Borzym K."/>
            <person name="Langer I."/>
            <person name="Beck A."/>
            <person name="Lehrach H."/>
            <person name="Reinhardt R."/>
            <person name="Pohl T.M."/>
            <person name="Eger P."/>
            <person name="Zimmermann W."/>
            <person name="Wedler H."/>
            <person name="Wambutt R."/>
            <person name="Purnelle B."/>
            <person name="Goffeau A."/>
            <person name="Cadieu E."/>
            <person name="Dreano S."/>
            <person name="Gloux S."/>
            <person name="Lelaure V."/>
            <person name="Mottier S."/>
            <person name="Galibert F."/>
            <person name="Aves S.J."/>
            <person name="Xiang Z."/>
            <person name="Hunt C."/>
            <person name="Moore K."/>
            <person name="Hurst S.M."/>
            <person name="Lucas M."/>
            <person name="Rochet M."/>
            <person name="Gaillardin C."/>
            <person name="Tallada V.A."/>
            <person name="Garzon A."/>
            <person name="Thode G."/>
            <person name="Daga R.R."/>
            <person name="Cruzado L."/>
            <person name="Jimenez J."/>
            <person name="Sanchez M."/>
            <person name="del Rey F."/>
            <person name="Benito J."/>
            <person name="Dominguez A."/>
            <person name="Revuelta J.L."/>
            <person name="Moreno S."/>
            <person name="Armstrong J."/>
            <person name="Forsburg S.L."/>
            <person name="Cerutti L."/>
            <person name="Lowe T."/>
            <person name="McCombie W.R."/>
            <person name="Paulsen I."/>
            <person name="Potashkin J."/>
            <person name="Shpakovski G.V."/>
            <person name="Ussery D."/>
            <person name="Barrell B.G."/>
            <person name="Nurse P."/>
        </authorList>
    </citation>
    <scope>NUCLEOTIDE SEQUENCE [LARGE SCALE GENOMIC DNA]</scope>
    <source>
        <strain>972 / ATCC 24843</strain>
    </source>
</reference>
<reference key="3">
    <citation type="journal article" date="2002" name="Mol. Cell. Biol.">
        <title>Proteomics analysis reveals stable multiprotein complexes in both fission and budding yeasts containing Myb-related Cdc5p/Cef1p, novel pre-mRNA splicing factors, and snRNAs.</title>
        <authorList>
            <person name="Ohi M.D."/>
            <person name="Link A.J."/>
            <person name="Ren L."/>
            <person name="Jennings J.L."/>
            <person name="McDonald W.H."/>
            <person name="Gould K.L."/>
        </authorList>
    </citation>
    <scope>IDENTIFICATION IN THE CWF COMPLEX</scope>
    <scope>IDENTIFICATION BY MASS SPECTROMETRY</scope>
</reference>
<feature type="chain" id="PRO_0000218242" description="Pre-mRNA-splicing factor cwf15">
    <location>
        <begin position="1"/>
        <end position="265"/>
    </location>
</feature>
<feature type="region of interest" description="Disordered" evidence="2">
    <location>
        <begin position="1"/>
        <end position="31"/>
    </location>
</feature>
<feature type="region of interest" description="Disordered" evidence="2">
    <location>
        <begin position="62"/>
        <end position="197"/>
    </location>
</feature>
<feature type="coiled-coil region" evidence="1">
    <location>
        <begin position="155"/>
        <end position="205"/>
    </location>
</feature>
<feature type="compositionally biased region" description="Acidic residues" evidence="2">
    <location>
        <begin position="113"/>
        <end position="125"/>
    </location>
</feature>
<feature type="compositionally biased region" description="Low complexity" evidence="2">
    <location>
        <begin position="143"/>
        <end position="155"/>
    </location>
</feature>
<feature type="compositionally biased region" description="Acidic residues" evidence="2">
    <location>
        <begin position="156"/>
        <end position="167"/>
    </location>
</feature>
<feature type="compositionally biased region" description="Basic and acidic residues" evidence="2">
    <location>
        <begin position="172"/>
        <end position="197"/>
    </location>
</feature>
<feature type="sequence conflict" description="In Ref. 1; BAA13805." evidence="4" ref="1">
    <original>V</original>
    <variation>L</variation>
    <location>
        <position position="238"/>
    </location>
</feature>
<feature type="helix" evidence="6">
    <location>
        <begin position="26"/>
        <end position="28"/>
    </location>
</feature>
<feature type="helix" evidence="6">
    <location>
        <begin position="40"/>
        <end position="42"/>
    </location>
</feature>
<feature type="helix" evidence="6">
    <location>
        <begin position="45"/>
        <end position="50"/>
    </location>
</feature>
<feature type="helix" evidence="6">
    <location>
        <begin position="53"/>
        <end position="68"/>
    </location>
</feature>
<feature type="strand" evidence="5">
    <location>
        <begin position="225"/>
        <end position="228"/>
    </location>
</feature>
<feature type="strand" evidence="6">
    <location>
        <begin position="229"/>
        <end position="232"/>
    </location>
</feature>
<feature type="turn" evidence="6">
    <location>
        <begin position="234"/>
        <end position="237"/>
    </location>
</feature>
<feature type="turn" evidence="6">
    <location>
        <begin position="250"/>
        <end position="252"/>
    </location>
</feature>
<feature type="helix" evidence="6">
    <location>
        <begin position="254"/>
        <end position="263"/>
    </location>
</feature>
<keyword id="KW-0002">3D-structure</keyword>
<keyword id="KW-0175">Coiled coil</keyword>
<keyword id="KW-0507">mRNA processing</keyword>
<keyword id="KW-0508">mRNA splicing</keyword>
<keyword id="KW-0539">Nucleus</keyword>
<keyword id="KW-1185">Reference proteome</keyword>
<keyword id="KW-0747">Spliceosome</keyword>
<proteinExistence type="evidence at protein level"/>
<evidence type="ECO:0000255" key="1"/>
<evidence type="ECO:0000256" key="2">
    <source>
        <dbReference type="SAM" id="MobiDB-lite"/>
    </source>
</evidence>
<evidence type="ECO:0000269" key="3">
    <source>
    </source>
</evidence>
<evidence type="ECO:0000305" key="4"/>
<evidence type="ECO:0007829" key="5">
    <source>
        <dbReference type="PDB" id="9ESH"/>
    </source>
</evidence>
<evidence type="ECO:0007829" key="6">
    <source>
        <dbReference type="PDB" id="9ESI"/>
    </source>
</evidence>